<sequence>MALRFEILHQSKKSRARVGRIETAHGYIDTPAFVPVATNGALKGVLDHSNIPLMFCNTYHLIVHPGAEAIAAMGGLHQFIGRNAPIITDSGGFQIFSLAYGSVAEEIKSCGKKKGGNTIIKVNDDGVHFKSYRDGRKLFLSPEISVQAQKDLGADIILPLDELLPFHADPTYFHQSSQRTYVWEKRSLDYHLKNPGIQSMYGVIHGGTFPDQRKLGCKFVEDLPFDGSAIGGSLGKNLQDIVEVVGVTAANLSAERPRHLLGIGDLPSIWATVGFGIDSFDSSYPTKAARHGMILTSQGPLKINNQRYSSDLNPIEPGCSCLACSQGITRAYLRHLFKVHEPNAGIWASIHNMHHMQKVMREIREGILNDRI</sequence>
<comment type="function">
    <text evidence="1">Catalyzes the base-exchange of a guanine (G) residue with the queuine precursor 7-aminomethyl-7-deazaguanine (PreQ1) at position 34 (anticodon wobble position) in tRNAs with GU(N) anticodons (tRNA-Asp, -Asn, -His and -Tyr). Catalysis occurs through a double-displacement mechanism. The nucleophile active site attacks the C1' of nucleotide 34 to detach the guanine base from the RNA, forming a covalent enzyme-RNA intermediate. The proton acceptor active site deprotonates the incoming PreQ1, allowing a nucleophilic attack on the C1' of the ribose to form the product. After dissociation, two additional enzymatic reactions on the tRNA convert PreQ1 to queuine (Q), resulting in the hypermodified nucleoside queuosine (7-(((4,5-cis-dihydroxy-2-cyclopenten-1-yl)amino)methyl)-7-deazaguanosine).</text>
</comment>
<comment type="catalytic activity">
    <reaction evidence="1">
        <text>7-aminomethyl-7-carbaguanine + guanosine(34) in tRNA = 7-aminomethyl-7-carbaguanosine(34) in tRNA + guanine</text>
        <dbReference type="Rhea" id="RHEA:24104"/>
        <dbReference type="Rhea" id="RHEA-COMP:10341"/>
        <dbReference type="Rhea" id="RHEA-COMP:10342"/>
        <dbReference type="ChEBI" id="CHEBI:16235"/>
        <dbReference type="ChEBI" id="CHEBI:58703"/>
        <dbReference type="ChEBI" id="CHEBI:74269"/>
        <dbReference type="ChEBI" id="CHEBI:82833"/>
        <dbReference type="EC" id="2.4.2.29"/>
    </reaction>
</comment>
<comment type="cofactor">
    <cofactor evidence="1">
        <name>Zn(2+)</name>
        <dbReference type="ChEBI" id="CHEBI:29105"/>
    </cofactor>
    <text evidence="1">Binds 1 zinc ion per subunit.</text>
</comment>
<comment type="pathway">
    <text evidence="1">tRNA modification; tRNA-queuosine biosynthesis.</text>
</comment>
<comment type="subunit">
    <text evidence="1">Homodimer. Within each dimer, one monomer is responsible for RNA recognition and catalysis, while the other monomer binds to the replacement base PreQ1.</text>
</comment>
<comment type="similarity">
    <text evidence="1">Belongs to the queuine tRNA-ribosyltransferase family.</text>
</comment>
<proteinExistence type="inferred from homology"/>
<evidence type="ECO:0000255" key="1">
    <source>
        <dbReference type="HAMAP-Rule" id="MF_00168"/>
    </source>
</evidence>
<dbReference type="EC" id="2.4.2.29" evidence="1"/>
<dbReference type="EMBL" id="AM884176">
    <property type="protein sequence ID" value="CAP03884.1"/>
    <property type="molecule type" value="Genomic_DNA"/>
</dbReference>
<dbReference type="RefSeq" id="WP_009873629.1">
    <property type="nucleotide sequence ID" value="NC_010287.1"/>
</dbReference>
<dbReference type="RefSeq" id="YP_001654521.1">
    <property type="nucleotide sequence ID" value="NC_010287.1"/>
</dbReference>
<dbReference type="SMR" id="B0B9U3"/>
<dbReference type="KEGG" id="ctb:CTL0445"/>
<dbReference type="PATRIC" id="fig|471472.4.peg.480"/>
<dbReference type="HOGENOM" id="CLU_022060_0_2_0"/>
<dbReference type="UniPathway" id="UPA00392"/>
<dbReference type="Proteomes" id="UP001154402">
    <property type="component" value="Chromosome"/>
</dbReference>
<dbReference type="GO" id="GO:0046872">
    <property type="term" value="F:metal ion binding"/>
    <property type="evidence" value="ECO:0007669"/>
    <property type="project" value="UniProtKB-KW"/>
</dbReference>
<dbReference type="GO" id="GO:0008479">
    <property type="term" value="F:tRNA-guanosine(34) queuine transglycosylase activity"/>
    <property type="evidence" value="ECO:0007669"/>
    <property type="project" value="UniProtKB-UniRule"/>
</dbReference>
<dbReference type="GO" id="GO:0008616">
    <property type="term" value="P:queuosine biosynthetic process"/>
    <property type="evidence" value="ECO:0007669"/>
    <property type="project" value="UniProtKB-UniRule"/>
</dbReference>
<dbReference type="GO" id="GO:0101030">
    <property type="term" value="P:tRNA-guanine transglycosylation"/>
    <property type="evidence" value="ECO:0007669"/>
    <property type="project" value="InterPro"/>
</dbReference>
<dbReference type="Gene3D" id="3.20.20.105">
    <property type="entry name" value="Queuine tRNA-ribosyltransferase-like"/>
    <property type="match status" value="1"/>
</dbReference>
<dbReference type="HAMAP" id="MF_00168">
    <property type="entry name" value="Q_tRNA_Tgt"/>
    <property type="match status" value="1"/>
</dbReference>
<dbReference type="InterPro" id="IPR004803">
    <property type="entry name" value="TGT"/>
</dbReference>
<dbReference type="InterPro" id="IPR036511">
    <property type="entry name" value="TGT-like_sf"/>
</dbReference>
<dbReference type="InterPro" id="IPR002616">
    <property type="entry name" value="tRNA_ribo_trans-like"/>
</dbReference>
<dbReference type="NCBIfam" id="TIGR00430">
    <property type="entry name" value="Q_tRNA_tgt"/>
    <property type="match status" value="1"/>
</dbReference>
<dbReference type="NCBIfam" id="TIGR00449">
    <property type="entry name" value="tgt_general"/>
    <property type="match status" value="1"/>
</dbReference>
<dbReference type="PANTHER" id="PTHR43468">
    <property type="match status" value="1"/>
</dbReference>
<dbReference type="PANTHER" id="PTHR43468:SF1">
    <property type="entry name" value="TRNA-GUANOSINE(34) QUEUINE TRANSGLYCOSYLASE"/>
    <property type="match status" value="1"/>
</dbReference>
<dbReference type="Pfam" id="PF01702">
    <property type="entry name" value="TGT"/>
    <property type="match status" value="1"/>
</dbReference>
<dbReference type="SUPFAM" id="SSF51713">
    <property type="entry name" value="tRNA-guanine transglycosylase"/>
    <property type="match status" value="1"/>
</dbReference>
<organism>
    <name type="scientific">Chlamydia trachomatis serovar L2 (strain ATCC VR-902B / DSM 19102 / 434/Bu)</name>
    <dbReference type="NCBI Taxonomy" id="471472"/>
    <lineage>
        <taxon>Bacteria</taxon>
        <taxon>Pseudomonadati</taxon>
        <taxon>Chlamydiota</taxon>
        <taxon>Chlamydiia</taxon>
        <taxon>Chlamydiales</taxon>
        <taxon>Chlamydiaceae</taxon>
        <taxon>Chlamydia/Chlamydophila group</taxon>
        <taxon>Chlamydia</taxon>
    </lineage>
</organism>
<gene>
    <name evidence="1" type="primary">tgt</name>
    <name type="ordered locus">CTL0445</name>
</gene>
<protein>
    <recommendedName>
        <fullName evidence="1">Queuine tRNA-ribosyltransferase</fullName>
        <ecNumber evidence="1">2.4.2.29</ecNumber>
    </recommendedName>
    <alternativeName>
        <fullName evidence="1">Guanine insertion enzyme</fullName>
    </alternativeName>
    <alternativeName>
        <fullName evidence="1">tRNA-guanine transglycosylase</fullName>
    </alternativeName>
</protein>
<accession>B0B9U3</accession>
<keyword id="KW-0328">Glycosyltransferase</keyword>
<keyword id="KW-0479">Metal-binding</keyword>
<keyword id="KW-0671">Queuosine biosynthesis</keyword>
<keyword id="KW-0808">Transferase</keyword>
<keyword id="KW-0819">tRNA processing</keyword>
<keyword id="KW-0862">Zinc</keyword>
<name>TGT_CHLT2</name>
<reference key="1">
    <citation type="journal article" date="2008" name="Genome Res.">
        <title>Chlamydia trachomatis: genome sequence analysis of lymphogranuloma venereum isolates.</title>
        <authorList>
            <person name="Thomson N.R."/>
            <person name="Holden M.T.G."/>
            <person name="Carder C."/>
            <person name="Lennard N."/>
            <person name="Lockey S.J."/>
            <person name="Marsh P."/>
            <person name="Skipp P."/>
            <person name="O'Connor C.D."/>
            <person name="Goodhead I."/>
            <person name="Norbertzcak H."/>
            <person name="Harris B."/>
            <person name="Ormond D."/>
            <person name="Rance R."/>
            <person name="Quail M.A."/>
            <person name="Parkhill J."/>
            <person name="Stephens R.S."/>
            <person name="Clarke I.N."/>
        </authorList>
    </citation>
    <scope>NUCLEOTIDE SEQUENCE [LARGE SCALE GENOMIC DNA]</scope>
    <source>
        <strain>ATCC VR-902B / DSM 19102 / 434/Bu</strain>
    </source>
</reference>
<feature type="chain" id="PRO_1000097534" description="Queuine tRNA-ribosyltransferase">
    <location>
        <begin position="1"/>
        <end position="372"/>
    </location>
</feature>
<feature type="region of interest" description="RNA binding" evidence="1">
    <location>
        <begin position="262"/>
        <end position="268"/>
    </location>
</feature>
<feature type="region of interest" description="RNA binding; important for wobble base 34 recognition" evidence="1">
    <location>
        <begin position="286"/>
        <end position="290"/>
    </location>
</feature>
<feature type="active site" description="Proton acceptor" evidence="1">
    <location>
        <position position="89"/>
    </location>
</feature>
<feature type="active site" description="Nucleophile" evidence="1">
    <location>
        <position position="281"/>
    </location>
</feature>
<feature type="binding site" evidence="1">
    <location>
        <begin position="89"/>
        <end position="93"/>
    </location>
    <ligand>
        <name>substrate</name>
    </ligand>
</feature>
<feature type="binding site" evidence="1">
    <location>
        <position position="161"/>
    </location>
    <ligand>
        <name>substrate</name>
    </ligand>
</feature>
<feature type="binding site" evidence="1">
    <location>
        <position position="232"/>
    </location>
    <ligand>
        <name>substrate</name>
    </ligand>
</feature>
<feature type="binding site" evidence="1">
    <location>
        <position position="319"/>
    </location>
    <ligand>
        <name>Zn(2+)</name>
        <dbReference type="ChEBI" id="CHEBI:29105"/>
    </ligand>
</feature>
<feature type="binding site" evidence="1">
    <location>
        <position position="321"/>
    </location>
    <ligand>
        <name>Zn(2+)</name>
        <dbReference type="ChEBI" id="CHEBI:29105"/>
    </ligand>
</feature>
<feature type="binding site" evidence="1">
    <location>
        <position position="324"/>
    </location>
    <ligand>
        <name>Zn(2+)</name>
        <dbReference type="ChEBI" id="CHEBI:29105"/>
    </ligand>
</feature>
<feature type="binding site" evidence="1">
    <location>
        <position position="351"/>
    </location>
    <ligand>
        <name>Zn(2+)</name>
        <dbReference type="ChEBI" id="CHEBI:29105"/>
    </ligand>
</feature>